<protein>
    <recommendedName>
        <fullName evidence="1">Large ribosomal subunit protein bL19</fullName>
    </recommendedName>
    <alternativeName>
        <fullName evidence="2">50S ribosomal protein L19</fullName>
    </alternativeName>
</protein>
<name>RL19_BEUC1</name>
<comment type="function">
    <text evidence="1">This protein is located at the 30S-50S ribosomal subunit interface and may play a role in the structure and function of the aminoacyl-tRNA binding site.</text>
</comment>
<comment type="similarity">
    <text evidence="1">Belongs to the bacterial ribosomal protein bL19 family.</text>
</comment>
<organism>
    <name type="scientific">Beutenbergia cavernae (strain ATCC BAA-8 / DSM 12333 / CCUG 43141 / JCM 11478 / NBRC 16432 / NCIMB 13614 / HKI 0122)</name>
    <dbReference type="NCBI Taxonomy" id="471853"/>
    <lineage>
        <taxon>Bacteria</taxon>
        <taxon>Bacillati</taxon>
        <taxon>Actinomycetota</taxon>
        <taxon>Actinomycetes</taxon>
        <taxon>Micrococcales</taxon>
        <taxon>Beutenbergiaceae</taxon>
        <taxon>Beutenbergia</taxon>
    </lineage>
</organism>
<reference key="1">
    <citation type="journal article" date="2009" name="Stand. Genomic Sci.">
        <title>Complete genome sequence of Beutenbergia cavernae type strain (HKI 0122).</title>
        <authorList>
            <person name="Land M."/>
            <person name="Pukall R."/>
            <person name="Abt B."/>
            <person name="Goker M."/>
            <person name="Rohde M."/>
            <person name="Glavina Del Rio T."/>
            <person name="Tice H."/>
            <person name="Copeland A."/>
            <person name="Cheng J.F."/>
            <person name="Lucas S."/>
            <person name="Chen F."/>
            <person name="Nolan M."/>
            <person name="Bruce D."/>
            <person name="Goodwin L."/>
            <person name="Pitluck S."/>
            <person name="Ivanova N."/>
            <person name="Mavromatis K."/>
            <person name="Ovchinnikova G."/>
            <person name="Pati A."/>
            <person name="Chen A."/>
            <person name="Palaniappan K."/>
            <person name="Hauser L."/>
            <person name="Chang Y.J."/>
            <person name="Jefferies C.C."/>
            <person name="Saunders E."/>
            <person name="Brettin T."/>
            <person name="Detter J.C."/>
            <person name="Han C."/>
            <person name="Chain P."/>
            <person name="Bristow J."/>
            <person name="Eisen J.A."/>
            <person name="Markowitz V."/>
            <person name="Hugenholtz P."/>
            <person name="Kyrpides N.C."/>
            <person name="Klenk H.P."/>
            <person name="Lapidus A."/>
        </authorList>
    </citation>
    <scope>NUCLEOTIDE SEQUENCE [LARGE SCALE GENOMIC DNA]</scope>
    <source>
        <strain>ATCC BAA-8 / DSM 12333 / CCUG 43141 / JCM 11478 / NBRC 16432 / NCIMB 13614 / HKI 0122</strain>
    </source>
</reference>
<dbReference type="EMBL" id="CP001618">
    <property type="protein sequence ID" value="ACQ80783.1"/>
    <property type="molecule type" value="Genomic_DNA"/>
</dbReference>
<dbReference type="RefSeq" id="WP_015883023.1">
    <property type="nucleotide sequence ID" value="NC_012669.1"/>
</dbReference>
<dbReference type="SMR" id="C5BWW7"/>
<dbReference type="STRING" id="471853.Bcav_2536"/>
<dbReference type="KEGG" id="bcv:Bcav_2536"/>
<dbReference type="eggNOG" id="COG0335">
    <property type="taxonomic scope" value="Bacteria"/>
</dbReference>
<dbReference type="HOGENOM" id="CLU_103507_2_2_11"/>
<dbReference type="OrthoDB" id="9803541at2"/>
<dbReference type="Proteomes" id="UP000007962">
    <property type="component" value="Chromosome"/>
</dbReference>
<dbReference type="GO" id="GO:0022625">
    <property type="term" value="C:cytosolic large ribosomal subunit"/>
    <property type="evidence" value="ECO:0007669"/>
    <property type="project" value="TreeGrafter"/>
</dbReference>
<dbReference type="GO" id="GO:0003735">
    <property type="term" value="F:structural constituent of ribosome"/>
    <property type="evidence" value="ECO:0007669"/>
    <property type="project" value="InterPro"/>
</dbReference>
<dbReference type="GO" id="GO:0006412">
    <property type="term" value="P:translation"/>
    <property type="evidence" value="ECO:0007669"/>
    <property type="project" value="UniProtKB-UniRule"/>
</dbReference>
<dbReference type="FunFam" id="2.30.30.790:FF:000001">
    <property type="entry name" value="50S ribosomal protein L19"/>
    <property type="match status" value="1"/>
</dbReference>
<dbReference type="Gene3D" id="2.30.30.790">
    <property type="match status" value="1"/>
</dbReference>
<dbReference type="HAMAP" id="MF_00402">
    <property type="entry name" value="Ribosomal_bL19"/>
    <property type="match status" value="1"/>
</dbReference>
<dbReference type="InterPro" id="IPR001857">
    <property type="entry name" value="Ribosomal_bL19"/>
</dbReference>
<dbReference type="InterPro" id="IPR018257">
    <property type="entry name" value="Ribosomal_bL19_CS"/>
</dbReference>
<dbReference type="InterPro" id="IPR038657">
    <property type="entry name" value="Ribosomal_bL19_sf"/>
</dbReference>
<dbReference type="InterPro" id="IPR008991">
    <property type="entry name" value="Translation_prot_SH3-like_sf"/>
</dbReference>
<dbReference type="NCBIfam" id="TIGR01024">
    <property type="entry name" value="rplS_bact"/>
    <property type="match status" value="1"/>
</dbReference>
<dbReference type="PANTHER" id="PTHR15680:SF9">
    <property type="entry name" value="LARGE RIBOSOMAL SUBUNIT PROTEIN BL19M"/>
    <property type="match status" value="1"/>
</dbReference>
<dbReference type="PANTHER" id="PTHR15680">
    <property type="entry name" value="RIBOSOMAL PROTEIN L19"/>
    <property type="match status" value="1"/>
</dbReference>
<dbReference type="Pfam" id="PF01245">
    <property type="entry name" value="Ribosomal_L19"/>
    <property type="match status" value="1"/>
</dbReference>
<dbReference type="PIRSF" id="PIRSF002191">
    <property type="entry name" value="Ribosomal_L19"/>
    <property type="match status" value="1"/>
</dbReference>
<dbReference type="PRINTS" id="PR00061">
    <property type="entry name" value="RIBOSOMALL19"/>
</dbReference>
<dbReference type="SUPFAM" id="SSF50104">
    <property type="entry name" value="Translation proteins SH3-like domain"/>
    <property type="match status" value="1"/>
</dbReference>
<dbReference type="PROSITE" id="PS01015">
    <property type="entry name" value="RIBOSOMAL_L19"/>
    <property type="match status" value="1"/>
</dbReference>
<gene>
    <name evidence="1" type="primary">rplS</name>
    <name type="ordered locus">Bcav_2536</name>
</gene>
<sequence>MQTLDPVDAASLRDDVPAFRPGDTLKVHVKVVEGARSRIQVFQGVVIARAGGGVRETFTIRKVSFGVGVERIFPVHSPSIDHIEVVTRGDVRRAKLYYLRSLRGKAAKIKEKRETPVG</sequence>
<accession>C5BWW7</accession>
<evidence type="ECO:0000255" key="1">
    <source>
        <dbReference type="HAMAP-Rule" id="MF_00402"/>
    </source>
</evidence>
<evidence type="ECO:0000305" key="2"/>
<keyword id="KW-1185">Reference proteome</keyword>
<keyword id="KW-0687">Ribonucleoprotein</keyword>
<keyword id="KW-0689">Ribosomal protein</keyword>
<proteinExistence type="inferred from homology"/>
<feature type="chain" id="PRO_1000205881" description="Large ribosomal subunit protein bL19">
    <location>
        <begin position="1"/>
        <end position="118"/>
    </location>
</feature>